<reference key="1">
    <citation type="journal article" date="1996" name="Arch. Virol.">
        <title>Restriction endonuclease mapping and molecular cloning of the human herpesvirus 6 variant B strain Z29 genome.</title>
        <authorList>
            <person name="Lindquester G.J."/>
            <person name="Inoue N."/>
            <person name="Allen R.D."/>
            <person name="Castelli J.W."/>
            <person name="Stamey F.R."/>
            <person name="Dambaugh T.R."/>
            <person name="O'Brian J.J."/>
            <person name="Danovich R.M."/>
            <person name="Frenkel N."/>
            <person name="Pellett P.E."/>
        </authorList>
    </citation>
    <scope>NUCLEOTIDE SEQUENCE [GENOMIC DNA]</scope>
</reference>
<reference key="2">
    <citation type="journal article" date="1999" name="J. Virol.">
        <title>Human herpesvirus 6B genome sequence: coding content and comparison with human herpesvirus 6A.</title>
        <authorList>
            <person name="Dominguez G."/>
            <person name="Dambaugh T.R."/>
            <person name="Stamey F.R."/>
            <person name="Dewhurst S."/>
            <person name="Inoue N."/>
            <person name="Pellett P.E."/>
        </authorList>
    </citation>
    <scope>NUCLEOTIDE SEQUENCE [LARGE SCALE GENOMIC DNA]</scope>
</reference>
<protein>
    <recommendedName>
        <fullName evidence="1">Cytoplasmic envelopment protein 1</fullName>
    </recommendedName>
</protein>
<accession>P52457</accession>
<sequence>MKSLKKLKELETSDVFNTLHVRTILKVIKIDKCVSLARHSLVNITVGDDGIWFHLEDGTMINGLEYKTICEKELGFQGFIGIIILDSEDTLQELRLNPFQFKRRLIHMKVDTPEEFMLCGLVFALENLPLKQSTLHKLIARLVLFPVLSPVTKILFNTCDKLVCTLRHIFFNEHASEILHKVPPMIRLYNEMKNTHIEVLELYFNTKRSHNFINLSLESRQLQDSSLQVIQLATQFAQIFYSKNEDTSS</sequence>
<gene>
    <name type="primary">U75</name>
    <name type="synonym">CB2L</name>
</gene>
<organismHost>
    <name type="scientific">Homo sapiens</name>
    <name type="common">Human</name>
    <dbReference type="NCBI Taxonomy" id="9606"/>
</organismHost>
<dbReference type="EMBL" id="AF157706">
    <property type="protein sequence ID" value="AAB06358.1"/>
    <property type="molecule type" value="Genomic_DNA"/>
</dbReference>
<dbReference type="PIR" id="T44220">
    <property type="entry name" value="T44220"/>
</dbReference>
<dbReference type="RefSeq" id="NP_050254.1">
    <property type="nucleotide sequence ID" value="NC_000898.1"/>
</dbReference>
<dbReference type="DNASU" id="1497075"/>
<dbReference type="GeneID" id="1497075"/>
<dbReference type="KEGG" id="vg:1497075"/>
<dbReference type="Proteomes" id="UP000006930">
    <property type="component" value="Segment"/>
</dbReference>
<dbReference type="GO" id="GO:0044177">
    <property type="term" value="C:host cell Golgi apparatus"/>
    <property type="evidence" value="ECO:0007669"/>
    <property type="project" value="UniProtKB-SubCell"/>
</dbReference>
<dbReference type="GO" id="GO:0019033">
    <property type="term" value="C:viral tegument"/>
    <property type="evidence" value="ECO:0007669"/>
    <property type="project" value="UniProtKB-SubCell"/>
</dbReference>
<dbReference type="HAMAP" id="MF_04038">
    <property type="entry name" value="HSV_CEP1"/>
    <property type="match status" value="1"/>
</dbReference>
<dbReference type="InterPro" id="IPR002600">
    <property type="entry name" value="Herpes_UL7"/>
</dbReference>
<dbReference type="Pfam" id="PF01677">
    <property type="entry name" value="Herpes_UL7"/>
    <property type="match status" value="1"/>
</dbReference>
<proteinExistence type="inferred from homology"/>
<feature type="chain" id="PRO_0000115919" description="Cytoplasmic envelopment protein 1">
    <location>
        <begin position="1"/>
        <end position="249"/>
    </location>
</feature>
<keyword id="KW-1035">Host cytoplasm</keyword>
<keyword id="KW-1040">Host Golgi apparatus</keyword>
<keyword id="KW-1185">Reference proteome</keyword>
<keyword id="KW-0946">Virion</keyword>
<keyword id="KW-0920">Virion tegument</keyword>
<name>CEP1_HHV6Z</name>
<evidence type="ECO:0000255" key="1">
    <source>
        <dbReference type="HAMAP-Rule" id="MF_04038"/>
    </source>
</evidence>
<comment type="function">
    <text evidence="1">Plays a critical role in cytoplasmic virus egress. Participates in the final step of tegumentation and envelope acquisition within the host cytoplasm.</text>
</comment>
<comment type="subcellular location">
    <subcellularLocation>
        <location evidence="1">Virion</location>
    </subcellularLocation>
    <subcellularLocation>
        <location evidence="1">Virion tegument</location>
    </subcellularLocation>
    <subcellularLocation>
        <location evidence="1">Host cytoplasm</location>
    </subcellularLocation>
    <subcellularLocation>
        <location evidence="1">Host Golgi apparatus</location>
    </subcellularLocation>
</comment>
<comment type="similarity">
    <text evidence="1">Belongs to the herpesviridae cytoplasmic envelopment protein 1 family.</text>
</comment>
<organism>
    <name type="scientific">Human herpesvirus 6B (strain Z29)</name>
    <name type="common">HHV-6 variant B</name>
    <name type="synonym">Human B lymphotropic virus</name>
    <dbReference type="NCBI Taxonomy" id="36351"/>
    <lineage>
        <taxon>Viruses</taxon>
        <taxon>Duplodnaviria</taxon>
        <taxon>Heunggongvirae</taxon>
        <taxon>Peploviricota</taxon>
        <taxon>Herviviricetes</taxon>
        <taxon>Herpesvirales</taxon>
        <taxon>Orthoherpesviridae</taxon>
        <taxon>Betaherpesvirinae</taxon>
        <taxon>Roseolovirus</taxon>
        <taxon>Roseolovirus humanbeta6b</taxon>
        <taxon>Human herpesvirus 6B</taxon>
    </lineage>
</organism>